<reference key="1">
    <citation type="journal article" date="1997" name="Genomics">
        <title>Elucidation of the sequence and the genomic organization of the human dentin matrix acidic phosphoprotein 1 (DMP1) gene: exclusion of the locus from a causative role in the pathogenesis of dentinogenesis imperfecta type II.</title>
        <authorList>
            <person name="Hirst K.L."/>
            <person name="Simmons D."/>
            <person name="Feng J."/>
            <person name="Aplin H."/>
            <person name="Dixon M.J."/>
            <person name="McDougall M."/>
        </authorList>
    </citation>
    <scope>NUCLEOTIDE SEQUENCE [MRNA] (ISOFORM 1)</scope>
    <source>
        <tissue>Molar</tissue>
    </source>
</reference>
<reference key="2">
    <citation type="submission" date="1996-07" db="EMBL/GenBank/DDBJ databases">
        <authorList>
            <person name="McDougall M."/>
            <person name="Juan X."/>
            <person name="Simmons D."/>
            <person name="Feng J."/>
        </authorList>
    </citation>
    <scope>NUCLEOTIDE SEQUENCE [MRNA] (ISOFORM 2)</scope>
    <scope>VARIANT CYS-69</scope>
</reference>
<reference key="3">
    <citation type="submission" date="2005-07" db="EMBL/GenBank/DDBJ databases">
        <authorList>
            <person name="Mural R.J."/>
            <person name="Istrail S."/>
            <person name="Sutton G.G."/>
            <person name="Florea L."/>
            <person name="Halpern A.L."/>
            <person name="Mobarry C.M."/>
            <person name="Lippert R."/>
            <person name="Walenz B."/>
            <person name="Shatkay H."/>
            <person name="Dew I."/>
            <person name="Miller J.R."/>
            <person name="Flanigan M.J."/>
            <person name="Edwards N.J."/>
            <person name="Bolanos R."/>
            <person name="Fasulo D."/>
            <person name="Halldorsson B.V."/>
            <person name="Hannenhalli S."/>
            <person name="Turner R."/>
            <person name="Yooseph S."/>
            <person name="Lu F."/>
            <person name="Nusskern D.R."/>
            <person name="Shue B.C."/>
            <person name="Zheng X.H."/>
            <person name="Zhong F."/>
            <person name="Delcher A.L."/>
            <person name="Huson D.H."/>
            <person name="Kravitz S.A."/>
            <person name="Mouchard L."/>
            <person name="Reinert K."/>
            <person name="Remington K.A."/>
            <person name="Clark A.G."/>
            <person name="Waterman M.S."/>
            <person name="Eichler E.E."/>
            <person name="Adams M.D."/>
            <person name="Hunkapiller M.W."/>
            <person name="Myers E.W."/>
            <person name="Venter J.C."/>
        </authorList>
    </citation>
    <scope>NUCLEOTIDE SEQUENCE [LARGE SCALE GENOMIC DNA]</scope>
</reference>
<reference key="4">
    <citation type="journal article" date="2004" name="Genome Res.">
        <title>The status, quality, and expansion of the NIH full-length cDNA project: the Mammalian Gene Collection (MGC).</title>
        <authorList>
            <consortium name="The MGC Project Team"/>
        </authorList>
    </citation>
    <scope>NUCLEOTIDE SEQUENCE [LARGE SCALE MRNA] (ISOFORM 1)</scope>
</reference>
<reference key="5">
    <citation type="journal article" date="1995" name="Genomics">
        <title>Mapping of the human dentin matrix acidic phosphoprotein gene (DMP1) to the dentinogenesis imperfecta type II critical region at chromosome 4q21.</title>
        <authorList>
            <person name="Aplin H.M."/>
            <person name="Hirst K.L."/>
            <person name="Crosby A.H."/>
            <person name="Dixon M.J."/>
        </authorList>
    </citation>
    <scope>NUCLEOTIDE SEQUENCE [GENOMIC DNA] OF 462-513</scope>
    <scope>GENE MAPPING</scope>
</reference>
<reference key="6">
    <citation type="journal article" date="2003" name="J. Biol. Chem.">
        <title>Dual functional roles of dentin matrix protein 1. Implications in biomineralization and gene transcription by activation of intracellular Ca2+ store.</title>
        <authorList>
            <person name="Narayanan K."/>
            <person name="Ramachandran A."/>
            <person name="Hao J."/>
            <person name="He G."/>
            <person name="Park K.W."/>
            <person name="Cho M."/>
            <person name="George A."/>
        </authorList>
    </citation>
    <scope>FUNCTION</scope>
    <scope>SUBCELLULAR LOCATION</scope>
    <scope>PHOSPHORYLATION</scope>
    <scope>INTERACTION WITH IMPORTIN ALPHA</scope>
</reference>
<reference key="7">
    <citation type="journal article" date="2006" name="Nat. Genet.">
        <title>DMP1 mutations in autosomal recessive hypophosphatemia implicate a bone matrix protein in the regulation of phosphate homeostasis.</title>
        <authorList>
            <person name="Lorenz-Depiereux B."/>
            <person name="Bastepe M."/>
            <person name="Benet-Pages A."/>
            <person name="Amyere M."/>
            <person name="Wagenstaller J."/>
            <person name="Mueller-Barth U."/>
            <person name="Badenhoop K."/>
            <person name="Kaiser S.M."/>
            <person name="Rittmaster R.S."/>
            <person name="Shlossberg A.H."/>
            <person name="Olivares J.L."/>
            <person name="Loris C."/>
            <person name="Ramos F.J."/>
            <person name="Glorieux F."/>
            <person name="Vikkula M."/>
            <person name="Jueppner H."/>
            <person name="Strom T.M."/>
        </authorList>
    </citation>
    <scope>INVOLVEMENT IN ARHR1</scope>
    <scope>VARIANTS CYS-69; ASN-117 AND HIS-272</scope>
</reference>
<reference key="8">
    <citation type="journal article" date="2006" name="Nat. Genet.">
        <title>Loss of DMP1 causes rickets and osteomalacia and identifies a role for osteocytes in mineral metabolism.</title>
        <authorList>
            <person name="Feng J.Q."/>
            <person name="Ward L.M."/>
            <person name="Liu S."/>
            <person name="Lu Y."/>
            <person name="Xie Y."/>
            <person name="Yuan B."/>
            <person name="Yu X."/>
            <person name="Rauch F."/>
            <person name="Davis S.I."/>
            <person name="Zhang S."/>
            <person name="Rios H."/>
            <person name="Drezner M.K."/>
            <person name="Quarles L.D."/>
            <person name="Bonewald L.F."/>
            <person name="White K.E."/>
        </authorList>
    </citation>
    <scope>INVOLVEMENT IN ARHR1</scope>
</reference>
<reference key="9">
    <citation type="journal article" date="2012" name="Science">
        <title>Secreted kinase phosphorylates extracellular proteins that regulate biomineralization.</title>
        <authorList>
            <person name="Tagliabracci V.S."/>
            <person name="Engel J.L."/>
            <person name="Wen J."/>
            <person name="Wiley S.E."/>
            <person name="Worby C.A."/>
            <person name="Kinch L.N."/>
            <person name="Xiao J."/>
            <person name="Grishin N.V."/>
            <person name="Dixon J.E."/>
        </authorList>
    </citation>
    <scope>PHOSPHORYLATION BY FAM20C</scope>
</reference>
<protein>
    <recommendedName>
        <fullName>Dentin matrix acidic phosphoprotein 1</fullName>
        <shortName>DMP-1</shortName>
        <shortName>Dentin matrix protein 1</shortName>
    </recommendedName>
</protein>
<sequence length="513" mass="55782">MKISILLMFLWGLSCALPVTRYQNNESEDSEEWKGHLAQAPTPPLESSESSEGSKVSSEEQANEDPSDSTQSEEGLGSDDHQYIYRLAGGFSRSTGKGGDDKDDDEDDSGDDTFGDDDSGPGPKDRQEGGNSRLGSDEDSDDTIQASEESAPQGQDSAQDTTSESRELDNEDRVDSKPEGGDSTQESESEEHWVGGGSDGESSHGDGSELDDEGMQSDDPESIRSERGNSRMNSAGMKSKESGENSEQANTQDSGGSQLLEHPSRKIFRKSRISEEDDRSELDDNNTMEEVKSDSTENSNSRDTGLSQPRRDSKGDSQEDSKENLSQEESQNVDGPSSESSQEANLSSQENSSESQEEVVSESRGDNPDPTTSYVEDQEDSDSSEEDSSHTLSHSKSESREEQADSESSESLNFSEESPESPEDENSSSQEGLQSHSSSAESQSEESHSEEDDSDSQDSSRSKEDSNSTESKSSSEEDGQLKNIEIESRKLTVDAYHNKPIGDQDDNDCQDGY</sequence>
<accession>Q13316</accession>
<accession>A1L4L3</accession>
<accession>O43265</accession>
<dbReference type="EMBL" id="U89012">
    <property type="protein sequence ID" value="AAC51332.1"/>
    <property type="molecule type" value="mRNA"/>
</dbReference>
<dbReference type="EMBL" id="U34037">
    <property type="protein sequence ID" value="AAA97602.1"/>
    <property type="molecule type" value="Genomic_DNA"/>
</dbReference>
<dbReference type="EMBL" id="CH471057">
    <property type="protein sequence ID" value="EAX05996.1"/>
    <property type="molecule type" value="Genomic_DNA"/>
</dbReference>
<dbReference type="EMBL" id="BC130581">
    <property type="protein sequence ID" value="AAI30582.1"/>
    <property type="molecule type" value="mRNA"/>
</dbReference>
<dbReference type="EMBL" id="BC132865">
    <property type="protein sequence ID" value="AAI32866.1"/>
    <property type="molecule type" value="mRNA"/>
</dbReference>
<dbReference type="EMBL" id="U65378">
    <property type="protein sequence ID" value="AAB87728.1"/>
    <property type="molecule type" value="mRNA"/>
</dbReference>
<dbReference type="CCDS" id="CCDS3623.1">
    <molecule id="Q13316-1"/>
</dbReference>
<dbReference type="CCDS" id="CCDS43249.1">
    <molecule id="Q13316-2"/>
</dbReference>
<dbReference type="RefSeq" id="NP_001073380.1">
    <molecule id="Q13316-2"/>
    <property type="nucleotide sequence ID" value="NM_001079911.3"/>
</dbReference>
<dbReference type="RefSeq" id="NP_004398.1">
    <molecule id="Q13316-1"/>
    <property type="nucleotide sequence ID" value="NM_004407.4"/>
</dbReference>
<dbReference type="BioGRID" id="108098">
    <property type="interactions" value="2"/>
</dbReference>
<dbReference type="FunCoup" id="Q13316">
    <property type="interactions" value="90"/>
</dbReference>
<dbReference type="IntAct" id="Q13316">
    <property type="interactions" value="1"/>
</dbReference>
<dbReference type="STRING" id="9606.ENSP00000340935"/>
<dbReference type="GlyCosmos" id="Q13316">
    <property type="glycosylation" value="8 sites, No reported glycans"/>
</dbReference>
<dbReference type="GlyGen" id="Q13316">
    <property type="glycosylation" value="9 sites"/>
</dbReference>
<dbReference type="iPTMnet" id="Q13316"/>
<dbReference type="PhosphoSitePlus" id="Q13316"/>
<dbReference type="BioMuta" id="DMP1"/>
<dbReference type="DMDM" id="7673998"/>
<dbReference type="MassIVE" id="Q13316"/>
<dbReference type="PaxDb" id="9606-ENSP00000340935"/>
<dbReference type="PeptideAtlas" id="Q13316"/>
<dbReference type="ProteomicsDB" id="59304">
    <molecule id="Q13316-1"/>
</dbReference>
<dbReference type="ProteomicsDB" id="59305">
    <molecule id="Q13316-2"/>
</dbReference>
<dbReference type="Antibodypedia" id="25470">
    <property type="antibodies" value="319 antibodies from 36 providers"/>
</dbReference>
<dbReference type="DNASU" id="1758"/>
<dbReference type="Ensembl" id="ENST00000282479.8">
    <molecule id="Q13316-2"/>
    <property type="protein sequence ID" value="ENSP00000282479.6"/>
    <property type="gene ID" value="ENSG00000152592.15"/>
</dbReference>
<dbReference type="Ensembl" id="ENST00000339673.11">
    <molecule id="Q13316-1"/>
    <property type="protein sequence ID" value="ENSP00000340935.6"/>
    <property type="gene ID" value="ENSG00000152592.15"/>
</dbReference>
<dbReference type="GeneID" id="1758"/>
<dbReference type="KEGG" id="hsa:1758"/>
<dbReference type="MANE-Select" id="ENST00000339673.11">
    <property type="protein sequence ID" value="ENSP00000340935.6"/>
    <property type="RefSeq nucleotide sequence ID" value="NM_004407.4"/>
    <property type="RefSeq protein sequence ID" value="NP_004398.1"/>
</dbReference>
<dbReference type="UCSC" id="uc003hqv.4">
    <molecule id="Q13316-1"/>
    <property type="organism name" value="human"/>
</dbReference>
<dbReference type="AGR" id="HGNC:2932"/>
<dbReference type="CTD" id="1758"/>
<dbReference type="DisGeNET" id="1758"/>
<dbReference type="GeneCards" id="DMP1"/>
<dbReference type="HGNC" id="HGNC:2932">
    <property type="gene designation" value="DMP1"/>
</dbReference>
<dbReference type="HPA" id="ENSG00000152592">
    <property type="expression patterns" value="Not detected"/>
</dbReference>
<dbReference type="MalaCards" id="DMP1"/>
<dbReference type="MIM" id="241520">
    <property type="type" value="phenotype"/>
</dbReference>
<dbReference type="MIM" id="600980">
    <property type="type" value="gene"/>
</dbReference>
<dbReference type="neXtProt" id="NX_Q13316"/>
<dbReference type="OpenTargets" id="ENSG00000152592"/>
<dbReference type="Orphanet" id="289176">
    <property type="disease" value="Autosomal recessive hypophosphatemic rickets"/>
</dbReference>
<dbReference type="PharmGKB" id="PA27379"/>
<dbReference type="VEuPathDB" id="HostDB:ENSG00000152592"/>
<dbReference type="eggNOG" id="KOG1181">
    <property type="taxonomic scope" value="Eukaryota"/>
</dbReference>
<dbReference type="GeneTree" id="ENSGT00730000111375"/>
<dbReference type="HOGENOM" id="CLU_040174_0_0_1"/>
<dbReference type="InParanoid" id="Q13316"/>
<dbReference type="OMA" id="HDDNDCQ"/>
<dbReference type="OrthoDB" id="9048789at2759"/>
<dbReference type="PAN-GO" id="Q13316">
    <property type="GO annotations" value="3 GO annotations based on evolutionary models"/>
</dbReference>
<dbReference type="PhylomeDB" id="Q13316"/>
<dbReference type="TreeFam" id="TF337029"/>
<dbReference type="PathwayCommons" id="Q13316"/>
<dbReference type="Reactome" id="R-HSA-3000178">
    <property type="pathway name" value="ECM proteoglycans"/>
</dbReference>
<dbReference type="Reactome" id="R-HSA-381426">
    <property type="pathway name" value="Regulation of Insulin-like Growth Factor (IGF) transport and uptake by Insulin-like Growth Factor Binding Proteins (IGFBPs)"/>
</dbReference>
<dbReference type="Reactome" id="R-HSA-8957275">
    <property type="pathway name" value="Post-translational protein phosphorylation"/>
</dbReference>
<dbReference type="SignaLink" id="Q13316"/>
<dbReference type="BioGRID-ORCS" id="1758">
    <property type="hits" value="6 hits in 1132 CRISPR screens"/>
</dbReference>
<dbReference type="GeneWiki" id="DMP1_(gene)"/>
<dbReference type="GenomeRNAi" id="1758"/>
<dbReference type="Pharos" id="Q13316">
    <property type="development level" value="Tbio"/>
</dbReference>
<dbReference type="PRO" id="PR:Q13316"/>
<dbReference type="Proteomes" id="UP000005640">
    <property type="component" value="Chromosome 4"/>
</dbReference>
<dbReference type="RNAct" id="Q13316">
    <property type="molecule type" value="protein"/>
</dbReference>
<dbReference type="Bgee" id="ENSG00000152592">
    <property type="expression patterns" value="Expressed in periodontal ligament and 37 other cell types or tissues"/>
</dbReference>
<dbReference type="GO" id="GO:0005788">
    <property type="term" value="C:endoplasmic reticulum lumen"/>
    <property type="evidence" value="ECO:0000304"/>
    <property type="project" value="Reactome"/>
</dbReference>
<dbReference type="GO" id="GO:0031012">
    <property type="term" value="C:extracellular matrix"/>
    <property type="evidence" value="ECO:0000318"/>
    <property type="project" value="GO_Central"/>
</dbReference>
<dbReference type="GO" id="GO:0005576">
    <property type="term" value="C:extracellular region"/>
    <property type="evidence" value="ECO:0000304"/>
    <property type="project" value="Reactome"/>
</dbReference>
<dbReference type="GO" id="GO:0005634">
    <property type="term" value="C:nucleus"/>
    <property type="evidence" value="ECO:0007669"/>
    <property type="project" value="UniProtKB-SubCell"/>
</dbReference>
<dbReference type="GO" id="GO:0005509">
    <property type="term" value="F:calcium ion binding"/>
    <property type="evidence" value="ECO:0000304"/>
    <property type="project" value="ProtInc"/>
</dbReference>
<dbReference type="GO" id="GO:0050840">
    <property type="term" value="F:extracellular matrix binding"/>
    <property type="evidence" value="ECO:0000318"/>
    <property type="project" value="GO_Central"/>
</dbReference>
<dbReference type="GO" id="GO:0005178">
    <property type="term" value="F:integrin binding"/>
    <property type="evidence" value="ECO:0000304"/>
    <property type="project" value="ProtInc"/>
</dbReference>
<dbReference type="GO" id="GO:0031214">
    <property type="term" value="P:biomineral tissue development"/>
    <property type="evidence" value="ECO:0007669"/>
    <property type="project" value="UniProtKB-KW"/>
</dbReference>
<dbReference type="GO" id="GO:0030198">
    <property type="term" value="P:extracellular matrix organization"/>
    <property type="evidence" value="ECO:0000318"/>
    <property type="project" value="GO_Central"/>
</dbReference>
<dbReference type="GO" id="GO:0001503">
    <property type="term" value="P:ossification"/>
    <property type="evidence" value="ECO:0000304"/>
    <property type="project" value="ProtInc"/>
</dbReference>
<dbReference type="GO" id="GO:0010811">
    <property type="term" value="P:positive regulation of cell-substrate adhesion"/>
    <property type="evidence" value="ECO:0007669"/>
    <property type="project" value="Ensembl"/>
</dbReference>
<dbReference type="GO" id="GO:0070173">
    <property type="term" value="P:regulation of enamel mineralization"/>
    <property type="evidence" value="ECO:0007669"/>
    <property type="project" value="Ensembl"/>
</dbReference>
<dbReference type="InterPro" id="IPR009889">
    <property type="entry name" value="DMP1"/>
</dbReference>
<dbReference type="PANTHER" id="PTHR23400">
    <property type="entry name" value="DENTIN MATRIX ACIDIC PHOSPHOPROTEIN 1"/>
    <property type="match status" value="1"/>
</dbReference>
<dbReference type="PANTHER" id="PTHR23400:SF0">
    <property type="entry name" value="DENTIN MATRIX ACIDIC PHOSPHOPROTEIN 1"/>
    <property type="match status" value="1"/>
</dbReference>
<dbReference type="Pfam" id="PF07263">
    <property type="entry name" value="DMP1"/>
    <property type="match status" value="1"/>
</dbReference>
<organism>
    <name type="scientific">Homo sapiens</name>
    <name type="common">Human</name>
    <dbReference type="NCBI Taxonomy" id="9606"/>
    <lineage>
        <taxon>Eukaryota</taxon>
        <taxon>Metazoa</taxon>
        <taxon>Chordata</taxon>
        <taxon>Craniata</taxon>
        <taxon>Vertebrata</taxon>
        <taxon>Euteleostomi</taxon>
        <taxon>Mammalia</taxon>
        <taxon>Eutheria</taxon>
        <taxon>Euarchontoglires</taxon>
        <taxon>Primates</taxon>
        <taxon>Haplorrhini</taxon>
        <taxon>Catarrhini</taxon>
        <taxon>Hominidae</taxon>
        <taxon>Homo</taxon>
    </lineage>
</organism>
<evidence type="ECO:0000255" key="1"/>
<evidence type="ECO:0000256" key="2">
    <source>
        <dbReference type="SAM" id="MobiDB-lite"/>
    </source>
</evidence>
<evidence type="ECO:0000269" key="3">
    <source>
    </source>
</evidence>
<evidence type="ECO:0000269" key="4">
    <source>
    </source>
</evidence>
<evidence type="ECO:0000269" key="5">
    <source>
    </source>
</evidence>
<evidence type="ECO:0000269" key="6">
    <source>
    </source>
</evidence>
<evidence type="ECO:0000269" key="7">
    <source ref="2"/>
</evidence>
<evidence type="ECO:0000303" key="8">
    <source ref="2"/>
</evidence>
<feature type="signal peptide" evidence="1">
    <location>
        <begin position="1"/>
        <end position="16"/>
    </location>
</feature>
<feature type="chain" id="PRO_0000021110" description="Dentin matrix acidic phosphoprotein 1">
    <location>
        <begin position="17"/>
        <end position="513"/>
    </location>
</feature>
<feature type="region of interest" description="Disordered" evidence="2">
    <location>
        <begin position="23"/>
        <end position="513"/>
    </location>
</feature>
<feature type="short sequence motif" description="Cell attachment site" evidence="1">
    <location>
        <begin position="364"/>
        <end position="366"/>
    </location>
</feature>
<feature type="compositionally biased region" description="Low complexity" evidence="2">
    <location>
        <begin position="46"/>
        <end position="60"/>
    </location>
</feature>
<feature type="compositionally biased region" description="Acidic residues" evidence="2">
    <location>
        <begin position="101"/>
        <end position="119"/>
    </location>
</feature>
<feature type="compositionally biased region" description="Polar residues" evidence="2">
    <location>
        <begin position="143"/>
        <end position="162"/>
    </location>
</feature>
<feature type="compositionally biased region" description="Basic and acidic residues" evidence="2">
    <location>
        <begin position="163"/>
        <end position="180"/>
    </location>
</feature>
<feature type="compositionally biased region" description="Acidic residues" evidence="2">
    <location>
        <begin position="208"/>
        <end position="220"/>
    </location>
</feature>
<feature type="compositionally biased region" description="Polar residues" evidence="2">
    <location>
        <begin position="245"/>
        <end position="257"/>
    </location>
</feature>
<feature type="compositionally biased region" description="Acidic residues" evidence="2">
    <location>
        <begin position="275"/>
        <end position="287"/>
    </location>
</feature>
<feature type="compositionally biased region" description="Polar residues" evidence="2">
    <location>
        <begin position="296"/>
        <end position="307"/>
    </location>
</feature>
<feature type="compositionally biased region" description="Basic and acidic residues" evidence="2">
    <location>
        <begin position="309"/>
        <end position="325"/>
    </location>
</feature>
<feature type="compositionally biased region" description="Low complexity" evidence="2">
    <location>
        <begin position="337"/>
        <end position="354"/>
    </location>
</feature>
<feature type="compositionally biased region" description="Acidic residues" evidence="2">
    <location>
        <begin position="376"/>
        <end position="386"/>
    </location>
</feature>
<feature type="compositionally biased region" description="Acidic residues" evidence="2">
    <location>
        <begin position="417"/>
        <end position="426"/>
    </location>
</feature>
<feature type="compositionally biased region" description="Low complexity" evidence="2">
    <location>
        <begin position="427"/>
        <end position="442"/>
    </location>
</feature>
<feature type="compositionally biased region" description="Basic and acidic residues" evidence="2">
    <location>
        <begin position="484"/>
        <end position="502"/>
    </location>
</feature>
<feature type="compositionally biased region" description="Acidic residues" evidence="2">
    <location>
        <begin position="503"/>
        <end position="513"/>
    </location>
</feature>
<feature type="glycosylation site" description="N-linked (GlcNAc...) asparagine" evidence="1">
    <location>
        <position position="25"/>
    </location>
</feature>
<feature type="glycosylation site" description="N-linked (GlcNAc...) asparagine" evidence="1">
    <location>
        <position position="285"/>
    </location>
</feature>
<feature type="glycosylation site" description="N-linked (GlcNAc...) asparagine" evidence="1">
    <location>
        <position position="324"/>
    </location>
</feature>
<feature type="glycosylation site" description="N-linked (GlcNAc...) asparagine" evidence="1">
    <location>
        <position position="345"/>
    </location>
</feature>
<feature type="glycosylation site" description="N-linked (GlcNAc...) asparagine" evidence="1">
    <location>
        <position position="351"/>
    </location>
</feature>
<feature type="glycosylation site" description="N-linked (GlcNAc...) asparagine" evidence="1">
    <location>
        <position position="413"/>
    </location>
</feature>
<feature type="glycosylation site" description="N-linked (GlcNAc...) asparagine" evidence="1">
    <location>
        <position position="426"/>
    </location>
</feature>
<feature type="glycosylation site" description="N-linked (GlcNAc...) asparagine" evidence="1">
    <location>
        <position position="467"/>
    </location>
</feature>
<feature type="splice variant" id="VSP_004191" description="In isoform 2." evidence="8">
    <location>
        <begin position="46"/>
        <end position="61"/>
    </location>
</feature>
<feature type="sequence variant" id="VAR_030750" description="In dbSNP:rs10019009." evidence="5 7">
    <original>S</original>
    <variation>C</variation>
    <location>
        <position position="69"/>
    </location>
</feature>
<feature type="sequence variant" id="VAR_030751" description="In one individual with tumoral calcinosis; dbSNP:rs140719182." evidence="5">
    <original>D</original>
    <variation>N</variation>
    <location>
        <position position="117"/>
    </location>
</feature>
<feature type="sequence variant" id="VAR_030752" description="In dbSNP:rs145237146." evidence="5">
    <original>R</original>
    <variation>H</variation>
    <location>
        <position position="272"/>
    </location>
</feature>
<feature type="sequence variant" id="VAR_033848" description="In dbSNP:rs34661425.">
    <original>K</original>
    <variation>R</variation>
    <location>
        <position position="463"/>
    </location>
</feature>
<name>DMP1_HUMAN</name>
<proteinExistence type="evidence at protein level"/>
<gene>
    <name type="primary">DMP1</name>
</gene>
<comment type="function">
    <text evidence="3">May have a dual function during osteoblast differentiation. In the nucleus of undifferentiated osteoblasts, unphosphorylated form acts as a transcriptional component for activation of osteoblast-specific genes like osteocalcin. During the osteoblast to osteocyte transition phase it is phosphorylated and exported into the extracellular matrix, where it regulates nucleation of hydroxyapatite.</text>
</comment>
<comment type="subunit">
    <text evidence="3">Interacts with importin alpha.</text>
</comment>
<comment type="subcellular location">
    <subcellularLocation>
        <location evidence="3">Nucleus</location>
    </subcellularLocation>
    <subcellularLocation>
        <location evidence="3">Cytoplasm</location>
    </subcellularLocation>
    <subcellularLocation>
        <location evidence="3">Secreted</location>
        <location evidence="3">Extracellular space</location>
        <location evidence="3">Extracellular matrix</location>
    </subcellularLocation>
    <text>In proliferating preosteoblasts it is nuclear, during early maturation stage is cytoplasmic and in mature osteoblast localizes in the mineralized matrix. Export from the nucleus of differentiating osteoblast is triggered by the release of calcium from intracellular stores followed by a massive influx of this pool of calcium into the nucleus.</text>
</comment>
<comment type="alternative products">
    <event type="alternative splicing"/>
    <isoform>
        <id>Q13316-1</id>
        <name>1</name>
        <sequence type="displayed"/>
    </isoform>
    <isoform>
        <id>Q13316-2</id>
        <name>2</name>
        <sequence type="described" ref="VSP_004191"/>
    </isoform>
</comment>
<comment type="tissue specificity">
    <text>Expressed in tooth particularly in odontoblast, ameloblast and cementoblast.</text>
</comment>
<comment type="PTM">
    <text evidence="3 6">Phosphorylated in the cytosol and extracellular matrix and unphosphorylated in the nucleus. Phosphorylation is necessary for nucleocytoplasmic transport and may be catalyzed by a nuclear isoform of CK2 and can be augmented by calcium. Phosphorylated (in vitro) by FAM20C in the extracellular medium at sites within the S-x-E/pS motif.</text>
</comment>
<comment type="disease" evidence="4 5">
    <disease id="DI-01243">
        <name>Hypophosphatemic rickets, autosomal recessive, 1</name>
        <acronym>ARHR1</acronym>
        <description>A hereditary form of hypophosphatemic rickets, a disorder of proximal renal tubule function that causes phosphate loss, hypophosphatemia and skeletal deformities, including rickets and osteomalacia unresponsive to vitamin D. Symptoms are bone pain, fractures and growth abnormalities.</description>
        <dbReference type="MIM" id="241520"/>
    </disease>
    <text>The disease is caused by variants affecting the gene represented in this entry.</text>
</comment>
<keyword id="KW-0025">Alternative splicing</keyword>
<keyword id="KW-0091">Biomineralization</keyword>
<keyword id="KW-0963">Cytoplasm</keyword>
<keyword id="KW-0272">Extracellular matrix</keyword>
<keyword id="KW-0325">Glycoprotein</keyword>
<keyword id="KW-0539">Nucleus</keyword>
<keyword id="KW-0597">Phosphoprotein</keyword>
<keyword id="KW-1267">Proteomics identification</keyword>
<keyword id="KW-1185">Reference proteome</keyword>
<keyword id="KW-0964">Secreted</keyword>
<keyword id="KW-0732">Signal</keyword>